<reference key="1">
    <citation type="submission" date="2009-01" db="EMBL/GenBank/DDBJ databases">
        <title>Complete sequence of chromosome of Methylobacterium nodulans ORS 2060.</title>
        <authorList>
            <consortium name="US DOE Joint Genome Institute"/>
            <person name="Lucas S."/>
            <person name="Copeland A."/>
            <person name="Lapidus A."/>
            <person name="Glavina del Rio T."/>
            <person name="Dalin E."/>
            <person name="Tice H."/>
            <person name="Bruce D."/>
            <person name="Goodwin L."/>
            <person name="Pitluck S."/>
            <person name="Sims D."/>
            <person name="Brettin T."/>
            <person name="Detter J.C."/>
            <person name="Han C."/>
            <person name="Larimer F."/>
            <person name="Land M."/>
            <person name="Hauser L."/>
            <person name="Kyrpides N."/>
            <person name="Ivanova N."/>
            <person name="Marx C.J."/>
            <person name="Richardson P."/>
        </authorList>
    </citation>
    <scope>NUCLEOTIDE SEQUENCE [LARGE SCALE GENOMIC DNA]</scope>
    <source>
        <strain>LMG 21967 / CNCM I-2342 / ORS 2060</strain>
    </source>
</reference>
<gene>
    <name evidence="1" type="primary">rpmA</name>
    <name type="ordered locus">Mnod_4724</name>
</gene>
<name>RL27_METNO</name>
<sequence length="88" mass="9393">MAHKKAGGSSRNGRDSDGRRLGVKKFGNEAVIAGNIIVRQRGTRWHPGANVGMGRDHTLFALTAGRVQFAKKHGRAYVTVVPAQAAAE</sequence>
<accession>B8IEL7</accession>
<proteinExistence type="inferred from homology"/>
<evidence type="ECO:0000255" key="1">
    <source>
        <dbReference type="HAMAP-Rule" id="MF_00539"/>
    </source>
</evidence>
<evidence type="ECO:0000256" key="2">
    <source>
        <dbReference type="SAM" id="MobiDB-lite"/>
    </source>
</evidence>
<evidence type="ECO:0000305" key="3"/>
<organism>
    <name type="scientific">Methylobacterium nodulans (strain LMG 21967 / CNCM I-2342 / ORS 2060)</name>
    <dbReference type="NCBI Taxonomy" id="460265"/>
    <lineage>
        <taxon>Bacteria</taxon>
        <taxon>Pseudomonadati</taxon>
        <taxon>Pseudomonadota</taxon>
        <taxon>Alphaproteobacteria</taxon>
        <taxon>Hyphomicrobiales</taxon>
        <taxon>Methylobacteriaceae</taxon>
        <taxon>Methylobacterium</taxon>
    </lineage>
</organism>
<protein>
    <recommendedName>
        <fullName evidence="1">Large ribosomal subunit protein bL27</fullName>
    </recommendedName>
    <alternativeName>
        <fullName evidence="3">50S ribosomal protein L27</fullName>
    </alternativeName>
</protein>
<dbReference type="EMBL" id="CP001349">
    <property type="protein sequence ID" value="ACL59589.1"/>
    <property type="molecule type" value="Genomic_DNA"/>
</dbReference>
<dbReference type="RefSeq" id="WP_015931223.1">
    <property type="nucleotide sequence ID" value="NC_011894.1"/>
</dbReference>
<dbReference type="SMR" id="B8IEL7"/>
<dbReference type="STRING" id="460265.Mnod_4724"/>
<dbReference type="KEGG" id="mno:Mnod_4724"/>
<dbReference type="eggNOG" id="COG0211">
    <property type="taxonomic scope" value="Bacteria"/>
</dbReference>
<dbReference type="HOGENOM" id="CLU_095424_4_1_5"/>
<dbReference type="OrthoDB" id="9803474at2"/>
<dbReference type="Proteomes" id="UP000008207">
    <property type="component" value="Chromosome"/>
</dbReference>
<dbReference type="GO" id="GO:0022625">
    <property type="term" value="C:cytosolic large ribosomal subunit"/>
    <property type="evidence" value="ECO:0007669"/>
    <property type="project" value="TreeGrafter"/>
</dbReference>
<dbReference type="GO" id="GO:0003735">
    <property type="term" value="F:structural constituent of ribosome"/>
    <property type="evidence" value="ECO:0007669"/>
    <property type="project" value="InterPro"/>
</dbReference>
<dbReference type="GO" id="GO:0006412">
    <property type="term" value="P:translation"/>
    <property type="evidence" value="ECO:0007669"/>
    <property type="project" value="UniProtKB-UniRule"/>
</dbReference>
<dbReference type="FunFam" id="2.40.50.100:FF:000020">
    <property type="entry name" value="50S ribosomal protein L27"/>
    <property type="match status" value="1"/>
</dbReference>
<dbReference type="Gene3D" id="2.40.50.100">
    <property type="match status" value="1"/>
</dbReference>
<dbReference type="HAMAP" id="MF_00539">
    <property type="entry name" value="Ribosomal_bL27"/>
    <property type="match status" value="1"/>
</dbReference>
<dbReference type="InterPro" id="IPR001684">
    <property type="entry name" value="Ribosomal_bL27"/>
</dbReference>
<dbReference type="InterPro" id="IPR018261">
    <property type="entry name" value="Ribosomal_bL27_CS"/>
</dbReference>
<dbReference type="NCBIfam" id="TIGR00062">
    <property type="entry name" value="L27"/>
    <property type="match status" value="1"/>
</dbReference>
<dbReference type="PANTHER" id="PTHR15893:SF0">
    <property type="entry name" value="LARGE RIBOSOMAL SUBUNIT PROTEIN BL27M"/>
    <property type="match status" value="1"/>
</dbReference>
<dbReference type="PANTHER" id="PTHR15893">
    <property type="entry name" value="RIBOSOMAL PROTEIN L27"/>
    <property type="match status" value="1"/>
</dbReference>
<dbReference type="Pfam" id="PF01016">
    <property type="entry name" value="Ribosomal_L27"/>
    <property type="match status" value="1"/>
</dbReference>
<dbReference type="PRINTS" id="PR00063">
    <property type="entry name" value="RIBOSOMALL27"/>
</dbReference>
<dbReference type="SUPFAM" id="SSF110324">
    <property type="entry name" value="Ribosomal L27 protein-like"/>
    <property type="match status" value="1"/>
</dbReference>
<dbReference type="PROSITE" id="PS00831">
    <property type="entry name" value="RIBOSOMAL_L27"/>
    <property type="match status" value="1"/>
</dbReference>
<keyword id="KW-1185">Reference proteome</keyword>
<keyword id="KW-0687">Ribonucleoprotein</keyword>
<keyword id="KW-0689">Ribosomal protein</keyword>
<feature type="chain" id="PRO_1000195875" description="Large ribosomal subunit protein bL27">
    <location>
        <begin position="1"/>
        <end position="88"/>
    </location>
</feature>
<feature type="region of interest" description="Disordered" evidence="2">
    <location>
        <begin position="1"/>
        <end position="21"/>
    </location>
</feature>
<comment type="similarity">
    <text evidence="1">Belongs to the bacterial ribosomal protein bL27 family.</text>
</comment>